<proteinExistence type="evidence at protein level"/>
<sequence>MFTLNKFLLLLFFLGTINLSFCEEENAEEERIDEPDETDVEVEKRFLPIIAGIAAKVFPKIFCAISKKC</sequence>
<comment type="function">
    <text evidence="3">Antibacterial activity against Gram-positive bacterium S.aureus and Gram-negative bacterium E.coli. Has activity against C.albicans.</text>
</comment>
<comment type="subcellular location">
    <subcellularLocation>
        <location evidence="4">Secreted</location>
    </subcellularLocation>
</comment>
<comment type="tissue specificity">
    <text>Expressed by the skin glands.</text>
</comment>
<comment type="mass spectrometry"/>
<comment type="similarity">
    <text evidence="4">Belongs to the frog skin active peptide (FSAP) family. Brevinin subfamily.</text>
</comment>
<evidence type="ECO:0000250" key="1"/>
<evidence type="ECO:0000255" key="2"/>
<evidence type="ECO:0000269" key="3">
    <source>
    </source>
</evidence>
<evidence type="ECO:0000305" key="4"/>
<feature type="signal peptide" evidence="2">
    <location>
        <begin position="1"/>
        <end position="20"/>
    </location>
</feature>
<feature type="propeptide" id="PRO_0000003447">
    <location>
        <begin position="21"/>
        <end position="43"/>
    </location>
</feature>
<feature type="peptide" id="PRO_0000003448" description="Brevinin-1Pb">
    <location>
        <begin position="46"/>
        <end position="69"/>
    </location>
</feature>
<feature type="disulfide bond" evidence="1">
    <location>
        <begin position="63"/>
        <end position="69"/>
    </location>
</feature>
<protein>
    <recommendedName>
        <fullName>Brevinin-1Pb</fullName>
    </recommendedName>
</protein>
<accession>Q8QFQ5</accession>
<accession>P82842</accession>
<organism>
    <name type="scientific">Lithobates pipiens</name>
    <name type="common">Northern leopard frog</name>
    <name type="synonym">Rana pipiens</name>
    <dbReference type="NCBI Taxonomy" id="8404"/>
    <lineage>
        <taxon>Eukaryota</taxon>
        <taxon>Metazoa</taxon>
        <taxon>Chordata</taxon>
        <taxon>Craniata</taxon>
        <taxon>Vertebrata</taxon>
        <taxon>Euteleostomi</taxon>
        <taxon>Amphibia</taxon>
        <taxon>Batrachia</taxon>
        <taxon>Anura</taxon>
        <taxon>Neobatrachia</taxon>
        <taxon>Ranoidea</taxon>
        <taxon>Ranidae</taxon>
        <taxon>Lithobates</taxon>
    </lineage>
</organism>
<keyword id="KW-0878">Amphibian defense peptide</keyword>
<keyword id="KW-0044">Antibiotic</keyword>
<keyword id="KW-0929">Antimicrobial</keyword>
<keyword id="KW-0165">Cleavage on pair of basic residues</keyword>
<keyword id="KW-0903">Direct protein sequencing</keyword>
<keyword id="KW-1015">Disulfide bond</keyword>
<keyword id="KW-0295">Fungicide</keyword>
<keyword id="KW-0964">Secreted</keyword>
<keyword id="KW-0732">Signal</keyword>
<reference key="1">
    <citation type="journal article" date="2003" name="Biochem. J.">
        <title>Granular gland transcriptomes in stimulated amphibian skin secretions.</title>
        <authorList>
            <person name="Chen T."/>
            <person name="Farragher S.M."/>
            <person name="Bjourson A.J."/>
            <person name="Orr D.F."/>
            <person name="Rao P."/>
            <person name="Shaw C."/>
        </authorList>
    </citation>
    <scope>NUCLEOTIDE SEQUENCE [MRNA]</scope>
    <source>
        <tissue>Skin</tissue>
    </source>
</reference>
<reference key="2">
    <citation type="journal article" date="2000" name="Eur. J. Biochem.">
        <title>Peptides with antimicrobial activity from four different families isolated from the skins of the North American frogs Rana luteiventris, Rana berlandieri and Rana pipiens.</title>
        <authorList>
            <person name="Goraya J."/>
            <person name="Wang Y."/>
            <person name="Li Z."/>
            <person name="O'Flaherty M."/>
            <person name="Knoop F.C."/>
            <person name="Platz J.E."/>
            <person name="Conlon J.M."/>
        </authorList>
    </citation>
    <scope>PROTEIN SEQUENCE OF 46-69</scope>
    <scope>FUNCTION</scope>
    <scope>MASS SPECTROMETRY</scope>
    <source>
        <tissue>Skin secretion</tissue>
    </source>
</reference>
<dbReference type="EMBL" id="AJ427746">
    <property type="protein sequence ID" value="CAD20745.1"/>
    <property type="molecule type" value="mRNA"/>
</dbReference>
<dbReference type="GO" id="GO:0005576">
    <property type="term" value="C:extracellular region"/>
    <property type="evidence" value="ECO:0007669"/>
    <property type="project" value="UniProtKB-SubCell"/>
</dbReference>
<dbReference type="GO" id="GO:0042742">
    <property type="term" value="P:defense response to bacterium"/>
    <property type="evidence" value="ECO:0007669"/>
    <property type="project" value="UniProtKB-KW"/>
</dbReference>
<dbReference type="GO" id="GO:0050832">
    <property type="term" value="P:defense response to fungus"/>
    <property type="evidence" value="ECO:0007669"/>
    <property type="project" value="UniProtKB-KW"/>
</dbReference>
<dbReference type="GO" id="GO:0031640">
    <property type="term" value="P:killing of cells of another organism"/>
    <property type="evidence" value="ECO:0007669"/>
    <property type="project" value="UniProtKB-KW"/>
</dbReference>
<dbReference type="InterPro" id="IPR012520">
    <property type="entry name" value="Antimicrobial_frog_1"/>
</dbReference>
<dbReference type="InterPro" id="IPR004275">
    <property type="entry name" value="Frog_antimicrobial_propeptide"/>
</dbReference>
<dbReference type="Pfam" id="PF08018">
    <property type="entry name" value="Antimicrobial_1"/>
    <property type="match status" value="1"/>
</dbReference>
<dbReference type="Pfam" id="PF03032">
    <property type="entry name" value="FSAP_sig_propep"/>
    <property type="match status" value="1"/>
</dbReference>
<name>BR1B_LITPI</name>